<proteinExistence type="inferred from homology"/>
<accession>A0A142I723</accession>
<comment type="function">
    <text evidence="3 6">Transcription factor; part of the gene cluster that mediates the biosynthesis of the phomopsins, a group of hexapeptide mycotoxins which infects lupins and causes lupinosis disease in livestock (PubMed:26979951). May play a role in the regulation of the production of phomopsins (Probable).</text>
</comment>
<comment type="subcellular location">
    <subcellularLocation>
        <location evidence="1">Nucleus</location>
    </subcellularLocation>
</comment>
<sequence length="469" mass="51026">MVVDGKTTRLRASCNACNESKVRCSQRKPTCARCERNGVECIYGLSRRTHKDAPPISMPPSQRSHNHPRGASRSSSSGGDTKANSNSSSNWHMSPNVPFMIPPQQQQQQQKDEAAAAAAATPRFQCMYTPQDATADTVNRAGLLLDMDFSSLVTGSSSPLTSVDPLSAAVTRFPTPGAEHTNPWALGPFFGGNTNNNSINNPDWTRQPTTMGPMITVPTTAPPSPSPSCTECSCHAGVTELLSSMRGGGDDRRLSLDAQLAKLKRCIVSSETSMGCAHGRDDAEPIHILAVSTLIGYVIDEFEMLASESPLRLSSSLADMSGSRNAERVAESILSSGSDESMSMSSMAATTGVNNMSMSMSMGNLLEPRLSWGVLELEDDDEVDLRQRLYLLSFRKLERLLSQLTIYLRNLHDARAGLPEPSRHMAFVMACDYTRLWLEKKAEDVKRMFLVARPAGDETMDPALMFTAH</sequence>
<name>PHOD2_DIALO</name>
<organism>
    <name type="scientific">Diaporthe leptostromiformis</name>
    <name type="common">Lupinosis disease fungus</name>
    <name type="synonym">Phomopsis leptostromiformis</name>
    <dbReference type="NCBI Taxonomy" id="291059"/>
    <lineage>
        <taxon>Eukaryota</taxon>
        <taxon>Fungi</taxon>
        <taxon>Dikarya</taxon>
        <taxon>Ascomycota</taxon>
        <taxon>Pezizomycotina</taxon>
        <taxon>Sordariomycetes</taxon>
        <taxon>Sordariomycetidae</taxon>
        <taxon>Diaporthales</taxon>
        <taxon>Diaporthaceae</taxon>
        <taxon>Diaporthe</taxon>
    </lineage>
</organism>
<keyword id="KW-0238">DNA-binding</keyword>
<keyword id="KW-0479">Metal-binding</keyword>
<keyword id="KW-0539">Nucleus</keyword>
<keyword id="KW-0804">Transcription</keyword>
<keyword id="KW-0805">Transcription regulation</keyword>
<keyword id="KW-0843">Virulence</keyword>
<keyword id="KW-0862">Zinc</keyword>
<dbReference type="EMBL" id="KU645827">
    <property type="protein sequence ID" value="AMR44275.1"/>
    <property type="molecule type" value="Genomic_DNA"/>
</dbReference>
<dbReference type="SMR" id="A0A142I723"/>
<dbReference type="GO" id="GO:0005634">
    <property type="term" value="C:nucleus"/>
    <property type="evidence" value="ECO:0007669"/>
    <property type="project" value="UniProtKB-SubCell"/>
</dbReference>
<dbReference type="GO" id="GO:0003677">
    <property type="term" value="F:DNA binding"/>
    <property type="evidence" value="ECO:0007669"/>
    <property type="project" value="UniProtKB-KW"/>
</dbReference>
<dbReference type="GO" id="GO:0000981">
    <property type="term" value="F:DNA-binding transcription factor activity, RNA polymerase II-specific"/>
    <property type="evidence" value="ECO:0007669"/>
    <property type="project" value="InterPro"/>
</dbReference>
<dbReference type="GO" id="GO:0008270">
    <property type="term" value="F:zinc ion binding"/>
    <property type="evidence" value="ECO:0007669"/>
    <property type="project" value="InterPro"/>
</dbReference>
<dbReference type="CDD" id="cd00067">
    <property type="entry name" value="GAL4"/>
    <property type="match status" value="1"/>
</dbReference>
<dbReference type="Gene3D" id="4.10.240.10">
    <property type="entry name" value="Zn(2)-C6 fungal-type DNA-binding domain"/>
    <property type="match status" value="1"/>
</dbReference>
<dbReference type="InterPro" id="IPR050675">
    <property type="entry name" value="OAF3"/>
</dbReference>
<dbReference type="InterPro" id="IPR036864">
    <property type="entry name" value="Zn2-C6_fun-type_DNA-bd_sf"/>
</dbReference>
<dbReference type="InterPro" id="IPR001138">
    <property type="entry name" value="Zn2Cys6_DnaBD"/>
</dbReference>
<dbReference type="PANTHER" id="PTHR31069:SF31">
    <property type="entry name" value="MONODICTYPHENONE CLUSTER TRANSCRIPTION FACTOR-RELATED"/>
    <property type="match status" value="1"/>
</dbReference>
<dbReference type="PANTHER" id="PTHR31069">
    <property type="entry name" value="OLEATE-ACTIVATED TRANSCRIPTION FACTOR 1-RELATED"/>
    <property type="match status" value="1"/>
</dbReference>
<dbReference type="Pfam" id="PF00172">
    <property type="entry name" value="Zn_clus"/>
    <property type="match status" value="1"/>
</dbReference>
<dbReference type="PRINTS" id="PR00755">
    <property type="entry name" value="AFLATOXINBRP"/>
</dbReference>
<dbReference type="SMART" id="SM00066">
    <property type="entry name" value="GAL4"/>
    <property type="match status" value="1"/>
</dbReference>
<dbReference type="SUPFAM" id="SSF57701">
    <property type="entry name" value="Zn2/Cys6 DNA-binding domain"/>
    <property type="match status" value="1"/>
</dbReference>
<dbReference type="PROSITE" id="PS50048">
    <property type="entry name" value="ZN2_CY6_FUNGAL_2"/>
    <property type="match status" value="1"/>
</dbReference>
<reference key="1">
    <citation type="journal article" date="2016" name="Proc. Natl. Acad. Sci. U.S.A.">
        <title>Biosynthetic investigation of phomopsins reveals a widespread pathway for ribosomal natural products in Ascomycetes.</title>
        <authorList>
            <person name="Ding W."/>
            <person name="Liu W.Q."/>
            <person name="Jia Y."/>
            <person name="Li Y."/>
            <person name="van der Donk W.A."/>
            <person name="Zhang Q."/>
        </authorList>
    </citation>
    <scope>NUCLEOTIDE SEQUENCE [GENOMIC DNA]</scope>
    <scope>FUNCTION</scope>
    <source>
        <strain>ATCC 26115 / IMI 115107 / C 1557</strain>
    </source>
</reference>
<reference key="2">
    <citation type="journal article" date="2021" name="Angew. Chem. Int. Ed.">
        <title>Biosynthetic studies of phomopsins unveil posttranslational installation of dehydroamino acids by ustYa family proteins.</title>
        <authorList>
            <person name="Sogahata K."/>
            <person name="Ozaki T."/>
            <person name="Igarashi Y."/>
            <person name="Naganuma Y."/>
            <person name="Liu C."/>
            <person name="Minami A."/>
            <person name="Oikawa H."/>
        </authorList>
    </citation>
    <scope>NOMENCLATURE</scope>
    <source>
        <strain>ATCC 26115 / IMI 115107 / C 1557</strain>
    </source>
</reference>
<feature type="chain" id="PRO_0000458397" description="Transcription factor phomD'">
    <location>
        <begin position="1"/>
        <end position="469"/>
    </location>
</feature>
<feature type="DNA-binding region" description="Zn(2)-C6 fungal-type" evidence="1">
    <location>
        <begin position="14"/>
        <end position="41"/>
    </location>
</feature>
<feature type="region of interest" description="Disordered" evidence="2">
    <location>
        <begin position="49"/>
        <end position="118"/>
    </location>
</feature>
<feature type="compositionally biased region" description="Polar residues" evidence="2">
    <location>
        <begin position="82"/>
        <end position="93"/>
    </location>
</feature>
<feature type="compositionally biased region" description="Low complexity" evidence="2">
    <location>
        <begin position="104"/>
        <end position="118"/>
    </location>
</feature>
<gene>
    <name evidence="5" type="primary">phomD'</name>
    <name evidence="4" type="synonym">PhomD</name>
</gene>
<protein>
    <recommendedName>
        <fullName evidence="5">Transcription factor phomD'</fullName>
    </recommendedName>
    <alternativeName>
        <fullName evidence="5">Phomopsin biosynthesis cluster protein D'</fullName>
    </alternativeName>
</protein>
<evidence type="ECO:0000255" key="1">
    <source>
        <dbReference type="PROSITE-ProRule" id="PRU00227"/>
    </source>
</evidence>
<evidence type="ECO:0000256" key="2">
    <source>
        <dbReference type="SAM" id="MobiDB-lite"/>
    </source>
</evidence>
<evidence type="ECO:0000269" key="3">
    <source>
    </source>
</evidence>
<evidence type="ECO:0000303" key="4">
    <source>
    </source>
</evidence>
<evidence type="ECO:0000303" key="5">
    <source>
    </source>
</evidence>
<evidence type="ECO:0000305" key="6">
    <source>
    </source>
</evidence>